<reference key="1">
    <citation type="submission" date="2005-06" db="EMBL/GenBank/DDBJ databases">
        <title>DNA sequences of macaque genes expressed in brain or testis and its evolutionary implications.</title>
        <authorList>
            <consortium name="International consortium for macaque cDNA sequencing and analysis"/>
        </authorList>
    </citation>
    <scope>NUCLEOTIDE SEQUENCE [LARGE SCALE MRNA]</scope>
    <source>
        <tissue>Testis</tissue>
    </source>
</reference>
<feature type="initiator methionine" description="Removed" evidence="3">
    <location>
        <position position="1"/>
    </location>
</feature>
<feature type="chain" id="PRO_0000291872" description="Eukaryotic translation initiation factor 3 subunit E">
    <location>
        <begin position="2"/>
        <end position="445"/>
    </location>
</feature>
<feature type="domain" description="PCI" evidence="4">
    <location>
        <begin position="221"/>
        <end position="398"/>
    </location>
</feature>
<feature type="region of interest" description="Sufficient for interaction with EPAS1" evidence="3">
    <location>
        <begin position="4"/>
        <end position="128"/>
    </location>
</feature>
<feature type="region of interest" description="Sufficient for interaction with TRIM27" evidence="3">
    <location>
        <begin position="9"/>
        <end position="195"/>
    </location>
</feature>
<feature type="region of interest" description="Sufficient for interaction with MCM7" evidence="3">
    <location>
        <begin position="351"/>
        <end position="445"/>
    </location>
</feature>
<feature type="modified residue" description="N-acetylalanine" evidence="1 3">
    <location>
        <position position="2"/>
    </location>
</feature>
<feature type="modified residue" description="Phosphoserine" evidence="1">
    <location>
        <position position="399"/>
    </location>
</feature>
<feature type="modified residue" description="Phosphothreonine" evidence="2">
    <location>
        <position position="439"/>
    </location>
</feature>
<feature type="modified residue" description="Phosphoserine" evidence="1">
    <location>
        <position position="442"/>
    </location>
</feature>
<feature type="modified residue" description="Phosphotyrosine" evidence="2">
    <location>
        <position position="445"/>
    </location>
</feature>
<dbReference type="EMBL" id="AB168168">
    <property type="protein sequence ID" value="BAE00293.1"/>
    <property type="status" value="ALT_INIT"/>
    <property type="molecule type" value="mRNA"/>
</dbReference>
<dbReference type="EMBL" id="AB169215">
    <property type="protein sequence ID" value="BAE01307.1"/>
    <property type="molecule type" value="mRNA"/>
</dbReference>
<dbReference type="RefSeq" id="XP_005563983.2">
    <property type="nucleotide sequence ID" value="XM_005563926.4"/>
</dbReference>
<dbReference type="RefSeq" id="XP_015310598.1">
    <property type="nucleotide sequence ID" value="XM_015455112.1"/>
</dbReference>
<dbReference type="RefSeq" id="XP_015310599.1">
    <property type="nucleotide sequence ID" value="XM_015455113.1"/>
</dbReference>
<dbReference type="SMR" id="Q4R6G8"/>
<dbReference type="STRING" id="9541.ENSMFAP00000043251"/>
<dbReference type="GeneID" id="101926076"/>
<dbReference type="KEGG" id="mcf:101926076"/>
<dbReference type="CTD" id="3646"/>
<dbReference type="eggNOG" id="KOG2758">
    <property type="taxonomic scope" value="Eukaryota"/>
</dbReference>
<dbReference type="Proteomes" id="UP000233100">
    <property type="component" value="Unplaced"/>
</dbReference>
<dbReference type="GO" id="GO:0016282">
    <property type="term" value="C:eukaryotic 43S preinitiation complex"/>
    <property type="evidence" value="ECO:0007669"/>
    <property type="project" value="UniProtKB-UniRule"/>
</dbReference>
<dbReference type="GO" id="GO:0033290">
    <property type="term" value="C:eukaryotic 48S preinitiation complex"/>
    <property type="evidence" value="ECO:0007669"/>
    <property type="project" value="UniProtKB-UniRule"/>
</dbReference>
<dbReference type="GO" id="GO:0005852">
    <property type="term" value="C:eukaryotic translation initiation factor 3 complex"/>
    <property type="evidence" value="ECO:0000250"/>
    <property type="project" value="UniProtKB"/>
</dbReference>
<dbReference type="GO" id="GO:0071540">
    <property type="term" value="C:eukaryotic translation initiation factor 3 complex, eIF3e"/>
    <property type="evidence" value="ECO:0007669"/>
    <property type="project" value="UniProtKB-UniRule"/>
</dbReference>
<dbReference type="GO" id="GO:0016605">
    <property type="term" value="C:PML body"/>
    <property type="evidence" value="ECO:0007669"/>
    <property type="project" value="UniProtKB-SubCell"/>
</dbReference>
<dbReference type="GO" id="GO:0003743">
    <property type="term" value="F:translation initiation factor activity"/>
    <property type="evidence" value="ECO:0007669"/>
    <property type="project" value="UniProtKB-UniRule"/>
</dbReference>
<dbReference type="GO" id="GO:0001732">
    <property type="term" value="P:formation of cytoplasmic translation initiation complex"/>
    <property type="evidence" value="ECO:0007669"/>
    <property type="project" value="UniProtKB-UniRule"/>
</dbReference>
<dbReference type="GO" id="GO:0000184">
    <property type="term" value="P:nuclear-transcribed mRNA catabolic process, nonsense-mediated decay"/>
    <property type="evidence" value="ECO:0000250"/>
    <property type="project" value="UniProtKB"/>
</dbReference>
<dbReference type="GO" id="GO:0006413">
    <property type="term" value="P:translational initiation"/>
    <property type="evidence" value="ECO:0000250"/>
    <property type="project" value="UniProtKB"/>
</dbReference>
<dbReference type="CDD" id="cd21378">
    <property type="entry name" value="eIF3E"/>
    <property type="match status" value="1"/>
</dbReference>
<dbReference type="HAMAP" id="MF_03004">
    <property type="entry name" value="eIF3e"/>
    <property type="match status" value="1"/>
</dbReference>
<dbReference type="InterPro" id="IPR016650">
    <property type="entry name" value="eIF3e"/>
</dbReference>
<dbReference type="InterPro" id="IPR019010">
    <property type="entry name" value="eIF3e_N"/>
</dbReference>
<dbReference type="InterPro" id="IPR000717">
    <property type="entry name" value="PCI_dom"/>
</dbReference>
<dbReference type="InterPro" id="IPR036390">
    <property type="entry name" value="WH_DNA-bd_sf"/>
</dbReference>
<dbReference type="PANTHER" id="PTHR10317">
    <property type="entry name" value="EUKARYOTIC TRANSLATION INITIATION FACTOR 3 SUBUNIT E"/>
    <property type="match status" value="1"/>
</dbReference>
<dbReference type="Pfam" id="PF09440">
    <property type="entry name" value="eIF3_N"/>
    <property type="match status" value="1"/>
</dbReference>
<dbReference type="Pfam" id="PF21357">
    <property type="entry name" value="EIF3E_C"/>
    <property type="match status" value="1"/>
</dbReference>
<dbReference type="Pfam" id="PF01399">
    <property type="entry name" value="PCI"/>
    <property type="match status" value="1"/>
</dbReference>
<dbReference type="PIRSF" id="PIRSF016255">
    <property type="entry name" value="eIF3e_su6"/>
    <property type="match status" value="1"/>
</dbReference>
<dbReference type="SMART" id="SM01186">
    <property type="entry name" value="eIF3_N"/>
    <property type="match status" value="1"/>
</dbReference>
<dbReference type="SMART" id="SM00088">
    <property type="entry name" value="PINT"/>
    <property type="match status" value="1"/>
</dbReference>
<dbReference type="SUPFAM" id="SSF46785">
    <property type="entry name" value="Winged helix' DNA-binding domain"/>
    <property type="match status" value="1"/>
</dbReference>
<dbReference type="PROSITE" id="PS50250">
    <property type="entry name" value="PCI"/>
    <property type="match status" value="1"/>
</dbReference>
<evidence type="ECO:0000250" key="1">
    <source>
        <dbReference type="UniProtKB" id="P60228"/>
    </source>
</evidence>
<evidence type="ECO:0000250" key="2">
    <source>
        <dbReference type="UniProtKB" id="P60229"/>
    </source>
</evidence>
<evidence type="ECO:0000255" key="3">
    <source>
        <dbReference type="HAMAP-Rule" id="MF_03004"/>
    </source>
</evidence>
<evidence type="ECO:0000255" key="4">
    <source>
        <dbReference type="PROSITE-ProRule" id="PRU01185"/>
    </source>
</evidence>
<evidence type="ECO:0000305" key="5"/>
<protein>
    <recommendedName>
        <fullName evidence="3">Eukaryotic translation initiation factor 3 subunit E</fullName>
        <shortName evidence="3">eIF3e</shortName>
    </recommendedName>
    <alternativeName>
        <fullName evidence="3">Eukaryotic translation initiation factor 3 subunit 6</fullName>
    </alternativeName>
    <alternativeName>
        <fullName evidence="3">eIF-3 p48</fullName>
    </alternativeName>
</protein>
<gene>
    <name evidence="3" type="primary">EIF3E</name>
    <name evidence="3" type="synonym">EIF3S6</name>
    <name evidence="3" type="synonym">INT6</name>
    <name type="ORF">QtsA-10282</name>
    <name type="ORF">QtsA-18056</name>
</gene>
<proteinExistence type="evidence at transcript level"/>
<name>EIF3E_MACFA</name>
<keyword id="KW-0007">Acetylation</keyword>
<keyword id="KW-0963">Cytoplasm</keyword>
<keyword id="KW-0396">Initiation factor</keyword>
<keyword id="KW-0539">Nucleus</keyword>
<keyword id="KW-0597">Phosphoprotein</keyword>
<keyword id="KW-0648">Protein biosynthesis</keyword>
<keyword id="KW-1185">Reference proteome</keyword>
<sequence length="445" mass="52221">MAEYDLTTRIAHFLDRHLVFPLLEFLSVKEIYNEKELLQGKLDLLSDTNMVDFAMDVYKNLYSDDIPHALREKRTTVVAQLKQLQAETEPIVKMFEDPETTRQMQSTRDGRMLFDYLADKHGFRQEYLDTLYRYAKFQYECGNYSGAAEYLYFFRVLVPATDRNALSSLWGKLASEILMQNWDAAMEDLTRLKETIDNNSVSSPLQSLQQRTWLIHWSLFVFFNHPKGRDNIIDLFLYQPQYLNAIQTMCPHILRYLTTAVITNKDVRKRRQVLKDLVKVIQQESYTYKDPITEFVECLYVNFDFDGAQKKLRECESVLVNDFFLVACLEDFIENARLFIFETFCRIHQCISINMLADKLNMTPEEAERWIVNLIRNARLDAKIDSKLGHVVMGNNAVSPYQQVIEKTKSLSFRSQMLAMNIEKKLNQNSRSEAPNWATQDSGFY</sequence>
<accession>Q4R6G8</accession>
<accession>Q4R9C8</accession>
<organism>
    <name type="scientific">Macaca fascicularis</name>
    <name type="common">Crab-eating macaque</name>
    <name type="synonym">Cynomolgus monkey</name>
    <dbReference type="NCBI Taxonomy" id="9541"/>
    <lineage>
        <taxon>Eukaryota</taxon>
        <taxon>Metazoa</taxon>
        <taxon>Chordata</taxon>
        <taxon>Craniata</taxon>
        <taxon>Vertebrata</taxon>
        <taxon>Euteleostomi</taxon>
        <taxon>Mammalia</taxon>
        <taxon>Eutheria</taxon>
        <taxon>Euarchontoglires</taxon>
        <taxon>Primates</taxon>
        <taxon>Haplorrhini</taxon>
        <taxon>Catarrhini</taxon>
        <taxon>Cercopithecidae</taxon>
        <taxon>Cercopithecinae</taxon>
        <taxon>Macaca</taxon>
    </lineage>
</organism>
<comment type="function">
    <text evidence="3">Component of the eukaryotic translation initiation factor 3 (eIF-3) complex, which is required for several steps in the initiation of protein synthesis. The eIF-3 complex associates with the 40S ribosome and facilitates the recruitment of eIF-1, eIF-1A, eIF-2:GTP:methionyl-tRNAi and eIF-5 to form the 43S pre-initiation complex (43S PIC). The eIF-3 complex stimulates mRNA recruitment to the 43S PIC and scanning of the mRNA for AUG recognition. The eIF-3 complex is also required for disassembly and recycling of post-termination ribosomal complexes and subsequently prevents premature joining of the 40S and 60S ribosomal subunits prior to initiation. The eIF-3 complex specifically targets and initiates translation of a subset of mRNAs involved in cell proliferation, including cell cycling, differentiation and apoptosis, and uses different modes of RNA stem-loop binding to exert either translational activation or repression. Required for nonsense-mediated mRNA decay (NMD); may act in conjunction with UPF2 to divert mRNAs from translation to the NMD pathway. May interact with MCM7 and EPAS1 and regulate the proteasome-mediated degradation of these proteins.</text>
</comment>
<comment type="subunit">
    <text evidence="1 3">Component of the eukaryotic translation initiation factor 3 (eIF-3) complex, which is composed of 13 subunits: EIF3A, EIF3B, EIF3C, EIF3D, EIF3E, EIF3F, EIF3G, EIF3H, EIF3I, EIF3J, EIF3K, EIF3L and EIF3M. The eIF-3 complex appears to include 3 stable modules: module A is composed of EIF3A, EIF3B, EIF3G and EIF3I; module B is composed of EIF3F, EIF3H, and EIF3M; and module C is composed of EIF3C, EIF3D, EIF3E, EIF3K and EIF3L. EIF3C of module C binds EIF3B of module A and EIF3H of module B, thereby linking the three modules. EIF3J is a labile subunit that binds to the eIF-3 complex via EIF3B. The eIF-3 complex interacts with RPS6KB1 under conditions of nutrient depletion. Mitogenic stimulation leads to binding and activation of a complex composed of MTOR and RPTOR, leading to phosphorylation and release of RPS6KB1 and binding of EIF4B to eIF-3. Interacts with COPS3, COPS6, COPS7 (COPS7A or COPS7B), EIF4G1, EPAS1, MCM7, NCBP1, PSMC6, TRIM27 and UPF2 (By similarity). Interacts with IFIT1 and IFIT2 (By similarity). Interacts with BZW2/5MP1 (By similarity).</text>
</comment>
<comment type="subcellular location">
    <subcellularLocation>
        <location evidence="3">Cytoplasm</location>
    </subcellularLocation>
    <subcellularLocation>
        <location evidence="3">Nucleus</location>
        <location evidence="3">PML body</location>
    </subcellularLocation>
</comment>
<comment type="similarity">
    <text evidence="3">Belongs to the eIF-3 subunit E family.</text>
</comment>
<comment type="sequence caution" evidence="5">
    <conflict type="erroneous initiation">
        <sequence resource="EMBL-CDS" id="BAE00293"/>
    </conflict>
</comment>